<sequence>MDVTGDTVPPANLRNEYAADLGLTESNLAGDWYTQFDRWFTEVVAAGLPEPNAMVLGTADRAGRPSARTVLLKGYDPDGFVLFTNYGSHKGTELAANPYASLVFPWFMLQRQVVVTGRVDRLDRAETEAYFASRPRGSQLGAWASEQSRVLPNRSALDDAYRAMAERYADGVPIPAPPNWGGFRLRPDGVEFWQGQASRLHDRLRFRSTDGGDWVVERLAP</sequence>
<gene>
    <name evidence="1" type="primary">pdxH</name>
    <name type="ordered locus">Sare_0512</name>
</gene>
<name>PDXH_SALAI</name>
<keyword id="KW-0285">Flavoprotein</keyword>
<keyword id="KW-0288">FMN</keyword>
<keyword id="KW-0560">Oxidoreductase</keyword>
<keyword id="KW-0664">Pyridoxine biosynthesis</keyword>
<organism>
    <name type="scientific">Salinispora arenicola (strain CNS-205)</name>
    <dbReference type="NCBI Taxonomy" id="391037"/>
    <lineage>
        <taxon>Bacteria</taxon>
        <taxon>Bacillati</taxon>
        <taxon>Actinomycetota</taxon>
        <taxon>Actinomycetes</taxon>
        <taxon>Micromonosporales</taxon>
        <taxon>Micromonosporaceae</taxon>
        <taxon>Salinispora</taxon>
    </lineage>
</organism>
<protein>
    <recommendedName>
        <fullName evidence="1">Pyridoxine/pyridoxamine 5'-phosphate oxidase</fullName>
        <ecNumber evidence="1">1.4.3.5</ecNumber>
    </recommendedName>
    <alternativeName>
        <fullName evidence="1">PNP/PMP oxidase</fullName>
        <shortName evidence="1">PNPOx</shortName>
    </alternativeName>
    <alternativeName>
        <fullName evidence="1">Pyridoxal 5'-phosphate synthase</fullName>
    </alternativeName>
</protein>
<proteinExistence type="inferred from homology"/>
<reference key="1">
    <citation type="submission" date="2007-10" db="EMBL/GenBank/DDBJ databases">
        <title>Complete sequence of Salinispora arenicola CNS-205.</title>
        <authorList>
            <consortium name="US DOE Joint Genome Institute"/>
            <person name="Copeland A."/>
            <person name="Lucas S."/>
            <person name="Lapidus A."/>
            <person name="Barry K."/>
            <person name="Glavina del Rio T."/>
            <person name="Dalin E."/>
            <person name="Tice H."/>
            <person name="Pitluck S."/>
            <person name="Foster B."/>
            <person name="Schmutz J."/>
            <person name="Larimer F."/>
            <person name="Land M."/>
            <person name="Hauser L."/>
            <person name="Kyrpides N."/>
            <person name="Ivanova N."/>
            <person name="Jensen P.R."/>
            <person name="Moore B.S."/>
            <person name="Penn K."/>
            <person name="Jenkins C."/>
            <person name="Udwary D."/>
            <person name="Xiang L."/>
            <person name="Gontang E."/>
            <person name="Richardson P."/>
        </authorList>
    </citation>
    <scope>NUCLEOTIDE SEQUENCE [LARGE SCALE GENOMIC DNA]</scope>
    <source>
        <strain>CNS-205</strain>
    </source>
</reference>
<dbReference type="EC" id="1.4.3.5" evidence="1"/>
<dbReference type="EMBL" id="CP000850">
    <property type="protein sequence ID" value="ABV96441.1"/>
    <property type="molecule type" value="Genomic_DNA"/>
</dbReference>
<dbReference type="SMR" id="A8M0C0"/>
<dbReference type="STRING" id="391037.Sare_0512"/>
<dbReference type="KEGG" id="saq:Sare_0512"/>
<dbReference type="PATRIC" id="fig|391037.6.peg.522"/>
<dbReference type="eggNOG" id="COG0259">
    <property type="taxonomic scope" value="Bacteria"/>
</dbReference>
<dbReference type="HOGENOM" id="CLU_032263_2_2_11"/>
<dbReference type="OrthoDB" id="9780392at2"/>
<dbReference type="UniPathway" id="UPA01068">
    <property type="reaction ID" value="UER00304"/>
</dbReference>
<dbReference type="UniPathway" id="UPA01068">
    <property type="reaction ID" value="UER00305"/>
</dbReference>
<dbReference type="GO" id="GO:0010181">
    <property type="term" value="F:FMN binding"/>
    <property type="evidence" value="ECO:0007669"/>
    <property type="project" value="UniProtKB-UniRule"/>
</dbReference>
<dbReference type="GO" id="GO:0004733">
    <property type="term" value="F:pyridoxamine phosphate oxidase activity"/>
    <property type="evidence" value="ECO:0007669"/>
    <property type="project" value="UniProtKB-UniRule"/>
</dbReference>
<dbReference type="GO" id="GO:0008615">
    <property type="term" value="P:pyridoxine biosynthetic process"/>
    <property type="evidence" value="ECO:0007669"/>
    <property type="project" value="UniProtKB-KW"/>
</dbReference>
<dbReference type="FunFam" id="2.30.110.10:FF:000020">
    <property type="entry name" value="PNPO isoform 11"/>
    <property type="match status" value="1"/>
</dbReference>
<dbReference type="Gene3D" id="2.30.110.10">
    <property type="entry name" value="Electron Transport, Fmn-binding Protein, Chain A"/>
    <property type="match status" value="1"/>
</dbReference>
<dbReference type="HAMAP" id="MF_01629">
    <property type="entry name" value="PdxH"/>
    <property type="match status" value="1"/>
</dbReference>
<dbReference type="InterPro" id="IPR000659">
    <property type="entry name" value="Pyridox_Oxase"/>
</dbReference>
<dbReference type="InterPro" id="IPR019740">
    <property type="entry name" value="Pyridox_Oxase_CS"/>
</dbReference>
<dbReference type="InterPro" id="IPR011576">
    <property type="entry name" value="Pyridox_Oxase_N"/>
</dbReference>
<dbReference type="InterPro" id="IPR019576">
    <property type="entry name" value="Pyridoxamine_oxidase_dimer_C"/>
</dbReference>
<dbReference type="InterPro" id="IPR012349">
    <property type="entry name" value="Split_barrel_FMN-bd"/>
</dbReference>
<dbReference type="NCBIfam" id="TIGR00558">
    <property type="entry name" value="pdxH"/>
    <property type="match status" value="1"/>
</dbReference>
<dbReference type="NCBIfam" id="NF004231">
    <property type="entry name" value="PRK05679.1"/>
    <property type="match status" value="1"/>
</dbReference>
<dbReference type="PANTHER" id="PTHR10851:SF0">
    <property type="entry name" value="PYRIDOXINE-5'-PHOSPHATE OXIDASE"/>
    <property type="match status" value="1"/>
</dbReference>
<dbReference type="PANTHER" id="PTHR10851">
    <property type="entry name" value="PYRIDOXINE-5-PHOSPHATE OXIDASE"/>
    <property type="match status" value="1"/>
</dbReference>
<dbReference type="Pfam" id="PF10590">
    <property type="entry name" value="PNP_phzG_C"/>
    <property type="match status" value="1"/>
</dbReference>
<dbReference type="Pfam" id="PF01243">
    <property type="entry name" value="PNPOx_N"/>
    <property type="match status" value="1"/>
</dbReference>
<dbReference type="PIRSF" id="PIRSF000190">
    <property type="entry name" value="Pyd_amn-ph_oxd"/>
    <property type="match status" value="1"/>
</dbReference>
<dbReference type="SUPFAM" id="SSF50475">
    <property type="entry name" value="FMN-binding split barrel"/>
    <property type="match status" value="1"/>
</dbReference>
<dbReference type="PROSITE" id="PS01064">
    <property type="entry name" value="PYRIDOX_OXIDASE"/>
    <property type="match status" value="1"/>
</dbReference>
<evidence type="ECO:0000255" key="1">
    <source>
        <dbReference type="HAMAP-Rule" id="MF_01629"/>
    </source>
</evidence>
<comment type="function">
    <text evidence="1">Catalyzes the oxidation of either pyridoxine 5'-phosphate (PNP) or pyridoxamine 5'-phosphate (PMP) into pyridoxal 5'-phosphate (PLP).</text>
</comment>
<comment type="catalytic activity">
    <reaction evidence="1">
        <text>pyridoxamine 5'-phosphate + O2 + H2O = pyridoxal 5'-phosphate + H2O2 + NH4(+)</text>
        <dbReference type="Rhea" id="RHEA:15817"/>
        <dbReference type="ChEBI" id="CHEBI:15377"/>
        <dbReference type="ChEBI" id="CHEBI:15379"/>
        <dbReference type="ChEBI" id="CHEBI:16240"/>
        <dbReference type="ChEBI" id="CHEBI:28938"/>
        <dbReference type="ChEBI" id="CHEBI:58451"/>
        <dbReference type="ChEBI" id="CHEBI:597326"/>
        <dbReference type="EC" id="1.4.3.5"/>
    </reaction>
</comment>
<comment type="catalytic activity">
    <reaction evidence="1">
        <text>pyridoxine 5'-phosphate + O2 = pyridoxal 5'-phosphate + H2O2</text>
        <dbReference type="Rhea" id="RHEA:15149"/>
        <dbReference type="ChEBI" id="CHEBI:15379"/>
        <dbReference type="ChEBI" id="CHEBI:16240"/>
        <dbReference type="ChEBI" id="CHEBI:58589"/>
        <dbReference type="ChEBI" id="CHEBI:597326"/>
        <dbReference type="EC" id="1.4.3.5"/>
    </reaction>
</comment>
<comment type="cofactor">
    <cofactor evidence="1">
        <name>FMN</name>
        <dbReference type="ChEBI" id="CHEBI:58210"/>
    </cofactor>
    <text evidence="1">Binds 1 FMN per subunit.</text>
</comment>
<comment type="pathway">
    <text evidence="1">Cofactor metabolism; pyridoxal 5'-phosphate salvage; pyridoxal 5'-phosphate from pyridoxamine 5'-phosphate: step 1/1.</text>
</comment>
<comment type="pathway">
    <text evidence="1">Cofactor metabolism; pyridoxal 5'-phosphate salvage; pyridoxal 5'-phosphate from pyridoxine 5'-phosphate: step 1/1.</text>
</comment>
<comment type="subunit">
    <text evidence="1">Homodimer.</text>
</comment>
<comment type="similarity">
    <text evidence="1">Belongs to the pyridoxamine 5'-phosphate oxidase family.</text>
</comment>
<feature type="chain" id="PRO_0000335796" description="Pyridoxine/pyridoxamine 5'-phosphate oxidase">
    <location>
        <begin position="1"/>
        <end position="221"/>
    </location>
</feature>
<feature type="binding site" evidence="1">
    <location>
        <begin position="14"/>
        <end position="17"/>
    </location>
    <ligand>
        <name>substrate</name>
    </ligand>
</feature>
<feature type="binding site" evidence="1">
    <location>
        <begin position="68"/>
        <end position="73"/>
    </location>
    <ligand>
        <name>FMN</name>
        <dbReference type="ChEBI" id="CHEBI:58210"/>
    </ligand>
</feature>
<feature type="binding site" evidence="1">
    <location>
        <position position="73"/>
    </location>
    <ligand>
        <name>substrate</name>
    </ligand>
</feature>
<feature type="binding site" evidence="1">
    <location>
        <begin position="83"/>
        <end position="84"/>
    </location>
    <ligand>
        <name>FMN</name>
        <dbReference type="ChEBI" id="CHEBI:58210"/>
    </ligand>
</feature>
<feature type="binding site" evidence="1">
    <location>
        <position position="90"/>
    </location>
    <ligand>
        <name>FMN</name>
        <dbReference type="ChEBI" id="CHEBI:58210"/>
    </ligand>
</feature>
<feature type="binding site" evidence="1">
    <location>
        <position position="112"/>
    </location>
    <ligand>
        <name>FMN</name>
        <dbReference type="ChEBI" id="CHEBI:58210"/>
    </ligand>
</feature>
<feature type="binding site" evidence="1">
    <location>
        <position position="130"/>
    </location>
    <ligand>
        <name>substrate</name>
    </ligand>
</feature>
<feature type="binding site" evidence="1">
    <location>
        <position position="134"/>
    </location>
    <ligand>
        <name>substrate</name>
    </ligand>
</feature>
<feature type="binding site" evidence="1">
    <location>
        <position position="138"/>
    </location>
    <ligand>
        <name>substrate</name>
    </ligand>
</feature>
<feature type="binding site" evidence="1">
    <location>
        <begin position="147"/>
        <end position="148"/>
    </location>
    <ligand>
        <name>FMN</name>
        <dbReference type="ChEBI" id="CHEBI:58210"/>
    </ligand>
</feature>
<feature type="binding site" evidence="1">
    <location>
        <position position="193"/>
    </location>
    <ligand>
        <name>FMN</name>
        <dbReference type="ChEBI" id="CHEBI:58210"/>
    </ligand>
</feature>
<feature type="binding site" evidence="1">
    <location>
        <begin position="199"/>
        <end position="201"/>
    </location>
    <ligand>
        <name>substrate</name>
    </ligand>
</feature>
<feature type="binding site" evidence="1">
    <location>
        <position position="203"/>
    </location>
    <ligand>
        <name>FMN</name>
        <dbReference type="ChEBI" id="CHEBI:58210"/>
    </ligand>
</feature>
<accession>A8M0C0</accession>